<keyword id="KW-0040">ANK repeat</keyword>
<keyword id="KW-1185">Reference proteome</keyword>
<keyword id="KW-0677">Repeat</keyword>
<accession>Q5UPQ4</accession>
<name>YL764_MIMIV</name>
<proteinExistence type="predicted"/>
<sequence>MYFHITYSDLDINETHDDDLKDFLIIPEEDIFGQFVTHILDPNENDLYEIEPDKICKNPFSSSIYTNNITIKNKYSLLDANIYEILLSKGISKYIDGLLVWAINFNLLWLLELIYNYKPPINLKDREIYLNSNCDDINLIKFIVTRNDYFQINLESLLEYVDNKEIIIYLMDFIDTDKIVKYVIGNCSSEFFIDCIKGNTILTQEHIKLAVQNRKIPVLEHLINLGIEYDLNEIINDIKDFDILKYMLEIGNSLNEDNVNIIIFNIHTTQLIEYLMNLGYTINSKLVISMFSHMLIVSENTDIVEFLKSINAKDSDLTVDFIEYLLEDNFEKAKQIMEYFPGANTVIDCNLFLKYAIISQDIPNIEYSINKGADLKKYYKNILLTNNVTILDLCLNHCEINDVNNFILKIIENDCIETLKYLVDNNYNIDLLDMFQIMVKKNYYNPIRKYICEQIKNNNLLIPNLVEIIMNLFFDDGDVNWILKYNFEYQYKDNLDEIIMTIIIGDCDGAKNMIMNYNYTSDLKVLYAFILKEFPEECSSEKMDTIKFLLDFNADNNEYVQSAFLLSVFYTPLLKYFVEDKQIDLTVNGQNIVEYLISDGDHEIFRYLYYNGFDVKNNGFEIINAHNSNNECAITKLIESIKNNTYQ</sequence>
<dbReference type="EMBL" id="AY653733">
    <property type="protein sequence ID" value="AAV51024.1"/>
    <property type="molecule type" value="Genomic_DNA"/>
</dbReference>
<dbReference type="SMR" id="Q5UPQ4"/>
<dbReference type="KEGG" id="vg:9925422"/>
<dbReference type="Proteomes" id="UP000001134">
    <property type="component" value="Genome"/>
</dbReference>
<protein>
    <recommendedName>
        <fullName>Putative ankyrin repeat protein L764</fullName>
    </recommendedName>
</protein>
<organismHost>
    <name type="scientific">Acanthamoeba polyphaga</name>
    <name type="common">Amoeba</name>
    <dbReference type="NCBI Taxonomy" id="5757"/>
</organismHost>
<feature type="chain" id="PRO_0000067192" description="Putative ankyrin repeat protein L764">
    <location>
        <begin position="1"/>
        <end position="647"/>
    </location>
</feature>
<feature type="repeat" description="ANK 1">
    <location>
        <begin position="123"/>
        <end position="154"/>
    </location>
</feature>
<feature type="repeat" description="ANK 2">
    <location>
        <begin position="202"/>
        <end position="231"/>
    </location>
</feature>
<feature type="repeat" description="ANK 3">
    <location>
        <begin position="233"/>
        <end position="256"/>
    </location>
</feature>
<feature type="repeat" description="ANK 4">
    <location>
        <begin position="258"/>
        <end position="284"/>
    </location>
</feature>
<feature type="repeat" description="ANK 5">
    <location>
        <begin position="289"/>
        <end position="319"/>
    </location>
</feature>
<feature type="repeat" description="ANK 6">
    <location>
        <begin position="348"/>
        <end position="377"/>
    </location>
</feature>
<feature type="repeat" description="ANK 7">
    <location>
        <begin position="401"/>
        <end position="431"/>
    </location>
</feature>
<feature type="repeat" description="ANK 8">
    <location>
        <begin position="529"/>
        <end position="558"/>
    </location>
</feature>
<feature type="repeat" description="ANK 9">
    <location>
        <begin position="588"/>
        <end position="617"/>
    </location>
</feature>
<reference key="1">
    <citation type="journal article" date="2004" name="Science">
        <title>The 1.2-megabase genome sequence of Mimivirus.</title>
        <authorList>
            <person name="Raoult D."/>
            <person name="Audic S."/>
            <person name="Robert C."/>
            <person name="Abergel C."/>
            <person name="Renesto P."/>
            <person name="Ogata H."/>
            <person name="La Scola B."/>
            <person name="Susan M."/>
            <person name="Claverie J.-M."/>
        </authorList>
    </citation>
    <scope>NUCLEOTIDE SEQUENCE [LARGE SCALE GENOMIC DNA]</scope>
    <source>
        <strain>Rowbotham-Bradford</strain>
    </source>
</reference>
<organism>
    <name type="scientific">Acanthamoeba polyphaga mimivirus</name>
    <name type="common">APMV</name>
    <dbReference type="NCBI Taxonomy" id="212035"/>
    <lineage>
        <taxon>Viruses</taxon>
        <taxon>Varidnaviria</taxon>
        <taxon>Bamfordvirae</taxon>
        <taxon>Nucleocytoviricota</taxon>
        <taxon>Megaviricetes</taxon>
        <taxon>Imitervirales</taxon>
        <taxon>Mimiviridae</taxon>
        <taxon>Megamimivirinae</taxon>
        <taxon>Mimivirus</taxon>
        <taxon>Mimivirus bradfordmassiliense</taxon>
    </lineage>
</organism>
<gene>
    <name type="ordered locus">MIMI_L764</name>
</gene>